<sequence length="446" mass="49094">MTNKTPADLIVSARWILPVRPTGRLYEHCALVIRDGNIIEIVPTSGIDSQFDYQEHIDLPNQLLMPGLINMHGHAAMSLFRGLADDLPLMEWLQDHIWPAEGEWVDEQFVLDGTQLAMAEMLLSGTTCFSDMYFYPEAAAGAAFEAGMRAQINFPILDFPTQWGSGPEDYIHKGLKLHDNYRSVDLINIGFGPHAPYTVSDEPLKRIAVLAEELQAPIQIHMHETAQEVSDSIANFGVRPLQRIADLGLLGPATQLVHMTQIDEQDIALLTTYSAHVVHCPESNLKLASGFCPVHTLQEHCINTCLGTDGAASNNDLSLFDEMHTASLLGKGVAQRADALKSDTAIEMATINAATAMGLDNIVGSLEKGKRADFIAIDFSNLQQAPIYNLKSHLVNTHVSHLVTHVWVDGKCLVAERELQTLDTKDIYSKACAWQVKIQAQRASGK</sequence>
<reference key="1">
    <citation type="journal article" date="2008" name="PLoS Genet.">
        <title>Complete genome sequence of the complex carbohydrate-degrading marine bacterium, Saccharophagus degradans strain 2-40 T.</title>
        <authorList>
            <person name="Weiner R.M."/>
            <person name="Taylor L.E. II"/>
            <person name="Henrissat B."/>
            <person name="Hauser L."/>
            <person name="Land M."/>
            <person name="Coutinho P.M."/>
            <person name="Rancurel C."/>
            <person name="Saunders E.H."/>
            <person name="Longmire A.G."/>
            <person name="Zhang H."/>
            <person name="Bayer E.A."/>
            <person name="Gilbert H.J."/>
            <person name="Larimer F."/>
            <person name="Zhulin I.B."/>
            <person name="Ekborg N.A."/>
            <person name="Lamed R."/>
            <person name="Richardson P.M."/>
            <person name="Borovok I."/>
            <person name="Hutcheson S."/>
        </authorList>
    </citation>
    <scope>NUCLEOTIDE SEQUENCE [LARGE SCALE GENOMIC DNA]</scope>
    <source>
        <strain>2-40 / ATCC 43961 / DSM 17024</strain>
    </source>
</reference>
<accession>Q21IS0</accession>
<keyword id="KW-0378">Hydrolase</keyword>
<keyword id="KW-0479">Metal-binding</keyword>
<keyword id="KW-1185">Reference proteome</keyword>
<keyword id="KW-0862">Zinc</keyword>
<organism>
    <name type="scientific">Saccharophagus degradans (strain 2-40 / ATCC 43961 / DSM 17024)</name>
    <dbReference type="NCBI Taxonomy" id="203122"/>
    <lineage>
        <taxon>Bacteria</taxon>
        <taxon>Pseudomonadati</taxon>
        <taxon>Pseudomonadota</taxon>
        <taxon>Gammaproteobacteria</taxon>
        <taxon>Cellvibrionales</taxon>
        <taxon>Cellvibrionaceae</taxon>
        <taxon>Saccharophagus</taxon>
    </lineage>
</organism>
<proteinExistence type="inferred from homology"/>
<feature type="chain" id="PRO_0000312458" description="5-methylthioadenosine/S-adenosylhomocysteine deaminase">
    <location>
        <begin position="1"/>
        <end position="446"/>
    </location>
</feature>
<feature type="binding site" evidence="1">
    <location>
        <position position="72"/>
    </location>
    <ligand>
        <name>Zn(2+)</name>
        <dbReference type="ChEBI" id="CHEBI:29105"/>
    </ligand>
</feature>
<feature type="binding site" evidence="1">
    <location>
        <position position="74"/>
    </location>
    <ligand>
        <name>Zn(2+)</name>
        <dbReference type="ChEBI" id="CHEBI:29105"/>
    </ligand>
</feature>
<feature type="binding site" evidence="1">
    <location>
        <position position="101"/>
    </location>
    <ligand>
        <name>substrate</name>
    </ligand>
</feature>
<feature type="binding site" evidence="1">
    <location>
        <position position="194"/>
    </location>
    <ligand>
        <name>substrate</name>
    </ligand>
</feature>
<feature type="binding site" evidence="1">
    <location>
        <position position="221"/>
    </location>
    <ligand>
        <name>Zn(2+)</name>
        <dbReference type="ChEBI" id="CHEBI:29105"/>
    </ligand>
</feature>
<feature type="binding site" evidence="1">
    <location>
        <position position="224"/>
    </location>
    <ligand>
        <name>substrate</name>
    </ligand>
</feature>
<feature type="binding site" evidence="1">
    <location>
        <position position="309"/>
    </location>
    <ligand>
        <name>substrate</name>
    </ligand>
</feature>
<feature type="binding site" evidence="1">
    <location>
        <position position="309"/>
    </location>
    <ligand>
        <name>Zn(2+)</name>
        <dbReference type="ChEBI" id="CHEBI:29105"/>
    </ligand>
</feature>
<name>MTAD_SACD2</name>
<protein>
    <recommendedName>
        <fullName evidence="1">5-methylthioadenosine/S-adenosylhomocysteine deaminase</fullName>
        <shortName evidence="1">MTA/SAH deaminase</shortName>
        <ecNumber evidence="1">3.5.4.28</ecNumber>
        <ecNumber evidence="1">3.5.4.31</ecNumber>
    </recommendedName>
</protein>
<dbReference type="EC" id="3.5.4.28" evidence="1"/>
<dbReference type="EC" id="3.5.4.31" evidence="1"/>
<dbReference type="EMBL" id="CP000282">
    <property type="protein sequence ID" value="ABD81409.1"/>
    <property type="molecule type" value="Genomic_DNA"/>
</dbReference>
<dbReference type="RefSeq" id="WP_011468627.1">
    <property type="nucleotide sequence ID" value="NC_007912.1"/>
</dbReference>
<dbReference type="SMR" id="Q21IS0"/>
<dbReference type="STRING" id="203122.Sde_2149"/>
<dbReference type="GeneID" id="98613820"/>
<dbReference type="KEGG" id="sde:Sde_2149"/>
<dbReference type="eggNOG" id="COG0402">
    <property type="taxonomic scope" value="Bacteria"/>
</dbReference>
<dbReference type="HOGENOM" id="CLU_012358_2_1_6"/>
<dbReference type="OrthoDB" id="9807210at2"/>
<dbReference type="Proteomes" id="UP000001947">
    <property type="component" value="Chromosome"/>
</dbReference>
<dbReference type="GO" id="GO:0090614">
    <property type="term" value="F:5'-methylthioadenosine deaminase activity"/>
    <property type="evidence" value="ECO:0007669"/>
    <property type="project" value="UniProtKB-UniRule"/>
</dbReference>
<dbReference type="GO" id="GO:0046872">
    <property type="term" value="F:metal ion binding"/>
    <property type="evidence" value="ECO:0007669"/>
    <property type="project" value="UniProtKB-KW"/>
</dbReference>
<dbReference type="GO" id="GO:0050270">
    <property type="term" value="F:S-adenosylhomocysteine deaminase activity"/>
    <property type="evidence" value="ECO:0007669"/>
    <property type="project" value="UniProtKB-UniRule"/>
</dbReference>
<dbReference type="CDD" id="cd01298">
    <property type="entry name" value="ATZ_TRZ_like"/>
    <property type="match status" value="1"/>
</dbReference>
<dbReference type="FunFam" id="3.20.20.140:FF:000014">
    <property type="entry name" value="5-methylthioadenosine/S-adenosylhomocysteine deaminase"/>
    <property type="match status" value="1"/>
</dbReference>
<dbReference type="Gene3D" id="3.20.20.140">
    <property type="entry name" value="Metal-dependent hydrolases"/>
    <property type="match status" value="1"/>
</dbReference>
<dbReference type="Gene3D" id="2.30.40.10">
    <property type="entry name" value="Urease, subunit C, domain 1"/>
    <property type="match status" value="1"/>
</dbReference>
<dbReference type="HAMAP" id="MF_01281">
    <property type="entry name" value="MTA_SAH_deamin"/>
    <property type="match status" value="1"/>
</dbReference>
<dbReference type="InterPro" id="IPR006680">
    <property type="entry name" value="Amidohydro-rel"/>
</dbReference>
<dbReference type="InterPro" id="IPR023512">
    <property type="entry name" value="Deaminase_MtaD/DadD"/>
</dbReference>
<dbReference type="InterPro" id="IPR011059">
    <property type="entry name" value="Metal-dep_hydrolase_composite"/>
</dbReference>
<dbReference type="InterPro" id="IPR032466">
    <property type="entry name" value="Metal_Hydrolase"/>
</dbReference>
<dbReference type="InterPro" id="IPR050287">
    <property type="entry name" value="MTA/SAH_deaminase"/>
</dbReference>
<dbReference type="NCBIfam" id="NF006549">
    <property type="entry name" value="PRK09045.1"/>
    <property type="match status" value="1"/>
</dbReference>
<dbReference type="PANTHER" id="PTHR43794:SF11">
    <property type="entry name" value="AMIDOHYDROLASE-RELATED DOMAIN-CONTAINING PROTEIN"/>
    <property type="match status" value="1"/>
</dbReference>
<dbReference type="PANTHER" id="PTHR43794">
    <property type="entry name" value="AMINOHYDROLASE SSNA-RELATED"/>
    <property type="match status" value="1"/>
</dbReference>
<dbReference type="Pfam" id="PF01979">
    <property type="entry name" value="Amidohydro_1"/>
    <property type="match status" value="1"/>
</dbReference>
<dbReference type="SUPFAM" id="SSF51338">
    <property type="entry name" value="Composite domain of metallo-dependent hydrolases"/>
    <property type="match status" value="1"/>
</dbReference>
<dbReference type="SUPFAM" id="SSF51556">
    <property type="entry name" value="Metallo-dependent hydrolases"/>
    <property type="match status" value="1"/>
</dbReference>
<evidence type="ECO:0000255" key="1">
    <source>
        <dbReference type="HAMAP-Rule" id="MF_01281"/>
    </source>
</evidence>
<gene>
    <name evidence="1" type="primary">mtaD</name>
    <name type="ordered locus">Sde_2149</name>
</gene>
<comment type="function">
    <text evidence="1">Catalyzes the deamination of 5-methylthioadenosine and S-adenosyl-L-homocysteine into 5-methylthioinosine and S-inosyl-L-homocysteine, respectively. Is also able to deaminate adenosine.</text>
</comment>
<comment type="catalytic activity">
    <reaction evidence="1">
        <text>S-adenosyl-L-homocysteine + H2O + H(+) = S-inosyl-L-homocysteine + NH4(+)</text>
        <dbReference type="Rhea" id="RHEA:20716"/>
        <dbReference type="ChEBI" id="CHEBI:15377"/>
        <dbReference type="ChEBI" id="CHEBI:15378"/>
        <dbReference type="ChEBI" id="CHEBI:28938"/>
        <dbReference type="ChEBI" id="CHEBI:57856"/>
        <dbReference type="ChEBI" id="CHEBI:57985"/>
        <dbReference type="EC" id="3.5.4.28"/>
    </reaction>
</comment>
<comment type="catalytic activity">
    <reaction evidence="1">
        <text>S-methyl-5'-thioadenosine + H2O + H(+) = S-methyl-5'-thioinosine + NH4(+)</text>
        <dbReference type="Rhea" id="RHEA:25025"/>
        <dbReference type="ChEBI" id="CHEBI:15377"/>
        <dbReference type="ChEBI" id="CHEBI:15378"/>
        <dbReference type="ChEBI" id="CHEBI:17509"/>
        <dbReference type="ChEBI" id="CHEBI:28938"/>
        <dbReference type="ChEBI" id="CHEBI:48595"/>
        <dbReference type="EC" id="3.5.4.31"/>
    </reaction>
</comment>
<comment type="cofactor">
    <cofactor evidence="1">
        <name>Zn(2+)</name>
        <dbReference type="ChEBI" id="CHEBI:29105"/>
    </cofactor>
    <text evidence="1">Binds 1 zinc ion per subunit.</text>
</comment>
<comment type="similarity">
    <text evidence="1">Belongs to the metallo-dependent hydrolases superfamily. MTA/SAH deaminase family.</text>
</comment>